<organism>
    <name type="scientific">Shewanella frigidimarina (strain NCIMB 400)</name>
    <dbReference type="NCBI Taxonomy" id="318167"/>
    <lineage>
        <taxon>Bacteria</taxon>
        <taxon>Pseudomonadati</taxon>
        <taxon>Pseudomonadota</taxon>
        <taxon>Gammaproteobacteria</taxon>
        <taxon>Alteromonadales</taxon>
        <taxon>Shewanellaceae</taxon>
        <taxon>Shewanella</taxon>
    </lineage>
</organism>
<evidence type="ECO:0000250" key="1">
    <source>
        <dbReference type="UniProtKB" id="P0C278"/>
    </source>
</evidence>
<evidence type="ECO:0000250" key="2">
    <source>
        <dbReference type="UniProtKB" id="P83223"/>
    </source>
</evidence>
<evidence type="ECO:0000269" key="3">
    <source>
    </source>
</evidence>
<evidence type="ECO:0000269" key="4">
    <source>
    </source>
</evidence>
<evidence type="ECO:0000269" key="5">
    <source>
    </source>
</evidence>
<evidence type="ECO:0000269" key="6">
    <source>
    </source>
</evidence>
<evidence type="ECO:0000303" key="7">
    <source>
    </source>
</evidence>
<evidence type="ECO:0000303" key="8">
    <source>
    </source>
</evidence>
<evidence type="ECO:0000305" key="9"/>
<evidence type="ECO:0000305" key="10">
    <source>
    </source>
</evidence>
<evidence type="ECO:0000305" key="11">
    <source>
    </source>
</evidence>
<protein>
    <recommendedName>
        <fullName evidence="9">Fumarate reductase (cytochrome)</fullName>
        <ecNumber evidence="11">1.3.2.4</ecNumber>
    </recommendedName>
    <alternativeName>
        <fullName evidence="7">Flavocytochrome c</fullName>
    </alternativeName>
    <alternativeName>
        <fullName evidence="8">Flavocytochrome c3</fullName>
        <shortName evidence="8">Fcc3</shortName>
    </alternativeName>
    <alternativeName>
        <fullName evidence="7">Soluble fumarate reductase</fullName>
    </alternativeName>
</protein>
<feature type="signal peptide" evidence="3">
    <location>
        <begin position="1"/>
        <end position="25"/>
    </location>
</feature>
<feature type="chain" id="PRO_0000269231" description="Fumarate reductase (cytochrome)">
    <location>
        <begin position="26"/>
        <end position="596"/>
    </location>
</feature>
<feature type="region of interest" description="Flavoprotein-like">
    <location>
        <begin position="143"/>
        <end position="596"/>
    </location>
</feature>
<feature type="active site" description="Proton donor" evidence="1">
    <location>
        <position position="427"/>
    </location>
</feature>
<feature type="binding site" description="axial binding residue" evidence="2">
    <location>
        <position position="33"/>
    </location>
    <ligand>
        <name>heme c</name>
        <dbReference type="ChEBI" id="CHEBI:61717"/>
        <label>2</label>
    </ligand>
    <ligandPart>
        <name>Fe</name>
        <dbReference type="ChEBI" id="CHEBI:18248"/>
    </ligandPart>
</feature>
<feature type="binding site" description="covalent" evidence="2">
    <location>
        <position position="39"/>
    </location>
    <ligand>
        <name>heme c</name>
        <dbReference type="ChEBI" id="CHEBI:61717"/>
        <label>1</label>
    </ligand>
</feature>
<feature type="binding site" description="covalent" evidence="2">
    <location>
        <position position="42"/>
    </location>
    <ligand>
        <name>heme c</name>
        <dbReference type="ChEBI" id="CHEBI:61717"/>
        <label>1</label>
    </ligand>
</feature>
<feature type="binding site" description="axial binding residue" evidence="2">
    <location>
        <position position="43"/>
    </location>
    <ligand>
        <name>heme c</name>
        <dbReference type="ChEBI" id="CHEBI:61717"/>
        <label>1</label>
    </ligand>
    <ligandPart>
        <name>Fe</name>
        <dbReference type="ChEBI" id="CHEBI:18248"/>
    </ligandPart>
</feature>
<feature type="binding site" description="covalent" evidence="2">
    <location>
        <position position="61"/>
    </location>
    <ligand>
        <name>heme c</name>
        <dbReference type="ChEBI" id="CHEBI:61717"/>
        <label>2</label>
    </ligand>
</feature>
<feature type="binding site" description="covalent" evidence="2">
    <location>
        <position position="64"/>
    </location>
    <ligand>
        <name>heme c</name>
        <dbReference type="ChEBI" id="CHEBI:61717"/>
        <label>2</label>
    </ligand>
</feature>
<feature type="binding site" description="axial binding residue" evidence="2">
    <location>
        <position position="65"/>
    </location>
    <ligand>
        <name>heme c</name>
        <dbReference type="ChEBI" id="CHEBI:61717"/>
        <label>2</label>
    </ligand>
    <ligandPart>
        <name>Fe</name>
        <dbReference type="ChEBI" id="CHEBI:18248"/>
    </ligandPart>
</feature>
<feature type="binding site" description="axial binding residue" evidence="2">
    <location>
        <position position="83"/>
    </location>
    <ligand>
        <name>heme c</name>
        <dbReference type="ChEBI" id="CHEBI:61717"/>
        <label>3</label>
    </ligand>
    <ligandPart>
        <name>Fe</name>
        <dbReference type="ChEBI" id="CHEBI:18248"/>
    </ligandPart>
</feature>
<feature type="binding site" description="axial binding residue" evidence="2">
    <location>
        <position position="86"/>
    </location>
    <ligand>
        <name>heme c</name>
        <dbReference type="ChEBI" id="CHEBI:61717"/>
        <label>4</label>
    </ligand>
    <ligandPart>
        <name>Fe</name>
        <dbReference type="ChEBI" id="CHEBI:18248"/>
    </ligandPart>
</feature>
<feature type="binding site" description="covalent" evidence="2">
    <location>
        <position position="93"/>
    </location>
    <ligand>
        <name>heme c</name>
        <dbReference type="ChEBI" id="CHEBI:61717"/>
        <label>3</label>
    </ligand>
</feature>
<feature type="binding site" description="covalent" evidence="2">
    <location>
        <position position="96"/>
    </location>
    <ligand>
        <name>heme c</name>
        <dbReference type="ChEBI" id="CHEBI:61717"/>
        <label>3</label>
    </ligand>
</feature>
<feature type="binding site" description="axial binding residue" evidence="2">
    <location>
        <position position="97"/>
    </location>
    <ligand>
        <name>heme c</name>
        <dbReference type="ChEBI" id="CHEBI:61717"/>
        <label>3</label>
    </ligand>
    <ligandPart>
        <name>Fe</name>
        <dbReference type="ChEBI" id="CHEBI:18248"/>
    </ligandPart>
</feature>
<feature type="binding site" evidence="2">
    <location>
        <position position="99"/>
    </location>
    <ligand>
        <name>heme c</name>
        <dbReference type="ChEBI" id="CHEBI:61717"/>
        <label>1</label>
    </ligand>
</feature>
<feature type="binding site" description="axial binding residue" evidence="2">
    <location>
        <position position="100"/>
    </location>
    <ligand>
        <name>heme c</name>
        <dbReference type="ChEBI" id="CHEBI:61717"/>
        <label>1</label>
    </ligand>
    <ligandPart>
        <name>Fe</name>
        <dbReference type="ChEBI" id="CHEBI:18248"/>
    </ligandPart>
</feature>
<feature type="binding site" description="covalent" evidence="2">
    <location>
        <position position="107"/>
    </location>
    <ligand>
        <name>heme c</name>
        <dbReference type="ChEBI" id="CHEBI:61717"/>
        <label>4</label>
    </ligand>
</feature>
<feature type="binding site" description="covalent" evidence="2">
    <location>
        <position position="110"/>
    </location>
    <ligand>
        <name>heme c</name>
        <dbReference type="ChEBI" id="CHEBI:61717"/>
        <label>4</label>
    </ligand>
</feature>
<feature type="binding site" description="axial binding residue" evidence="2">
    <location>
        <position position="111"/>
    </location>
    <ligand>
        <name>heme c</name>
        <dbReference type="ChEBI" id="CHEBI:61717"/>
        <label>4</label>
    </ligand>
    <ligandPart>
        <name>Fe</name>
        <dbReference type="ChEBI" id="CHEBI:18248"/>
    </ligandPart>
</feature>
<feature type="binding site" evidence="2">
    <location>
        <position position="162"/>
    </location>
    <ligand>
        <name>FAD</name>
        <dbReference type="ChEBI" id="CHEBI:57692"/>
    </ligand>
</feature>
<feature type="binding site" evidence="2">
    <location>
        <position position="181"/>
    </location>
    <ligand>
        <name>FAD</name>
        <dbReference type="ChEBI" id="CHEBI:57692"/>
    </ligand>
</feature>
<feature type="binding site" evidence="2">
    <location>
        <position position="189"/>
    </location>
    <ligand>
        <name>FAD</name>
        <dbReference type="ChEBI" id="CHEBI:57692"/>
    </ligand>
</feature>
<feature type="binding site" evidence="2">
    <location>
        <position position="194"/>
    </location>
    <ligand>
        <name>FAD</name>
        <dbReference type="ChEBI" id="CHEBI:57692"/>
    </ligand>
</feature>
<feature type="binding site" evidence="2">
    <location>
        <position position="195"/>
    </location>
    <ligand>
        <name>FAD</name>
        <dbReference type="ChEBI" id="CHEBI:57692"/>
    </ligand>
</feature>
<feature type="binding site" evidence="2">
    <location>
        <position position="195"/>
    </location>
    <ligand>
        <name>fumarate</name>
        <dbReference type="ChEBI" id="CHEBI:29806"/>
    </ligand>
</feature>
<feature type="binding site" evidence="2">
    <location>
        <position position="195"/>
    </location>
    <ligand>
        <name>succinate</name>
        <dbReference type="ChEBI" id="CHEBI:30031"/>
    </ligand>
</feature>
<feature type="binding site" evidence="2">
    <location>
        <position position="196"/>
    </location>
    <ligand>
        <name>FAD</name>
        <dbReference type="ChEBI" id="CHEBI:57692"/>
    </ligand>
</feature>
<feature type="binding site" evidence="2">
    <location>
        <position position="303"/>
    </location>
    <ligand>
        <name>FAD</name>
        <dbReference type="ChEBI" id="CHEBI:57692"/>
    </ligand>
</feature>
<feature type="binding site" evidence="2">
    <location>
        <position position="369"/>
    </location>
    <ligand>
        <name>FAD</name>
        <dbReference type="ChEBI" id="CHEBI:57692"/>
    </ligand>
</feature>
<feature type="binding site" evidence="2">
    <location>
        <position position="386"/>
    </location>
    <ligand>
        <name>heme c</name>
        <dbReference type="ChEBI" id="CHEBI:61717"/>
        <label>3</label>
    </ligand>
</feature>
<feature type="binding site" evidence="2">
    <location>
        <position position="390"/>
    </location>
    <ligand>
        <name>succinate</name>
        <dbReference type="ChEBI" id="CHEBI:30031"/>
    </ligand>
</feature>
<feature type="binding site" evidence="2">
    <location>
        <position position="402"/>
    </location>
    <ligand>
        <name>fumarate</name>
        <dbReference type="ChEBI" id="CHEBI:29806"/>
    </ligand>
</feature>
<feature type="binding site" evidence="2">
    <location>
        <position position="402"/>
    </location>
    <ligand>
        <name>succinate</name>
        <dbReference type="ChEBI" id="CHEBI:30031"/>
    </ligand>
</feature>
<feature type="binding site" evidence="2">
    <location>
        <position position="403"/>
    </location>
    <ligand>
        <name>fumarate</name>
        <dbReference type="ChEBI" id="CHEBI:29806"/>
    </ligand>
</feature>
<feature type="binding site" evidence="2">
    <location>
        <position position="403"/>
    </location>
    <ligand>
        <name>succinate</name>
        <dbReference type="ChEBI" id="CHEBI:30031"/>
    </ligand>
</feature>
<feature type="binding site" evidence="2">
    <location>
        <position position="529"/>
    </location>
    <ligand>
        <name>fumarate</name>
        <dbReference type="ChEBI" id="CHEBI:29806"/>
    </ligand>
</feature>
<feature type="binding site" evidence="2">
    <location>
        <position position="529"/>
    </location>
    <ligand>
        <name>succinate</name>
        <dbReference type="ChEBI" id="CHEBI:30031"/>
    </ligand>
</feature>
<feature type="binding site" evidence="2">
    <location>
        <position position="530"/>
    </location>
    <ligand>
        <name>FAD</name>
        <dbReference type="ChEBI" id="CHEBI:57692"/>
    </ligand>
</feature>
<feature type="binding site" evidence="2">
    <location>
        <position position="559"/>
    </location>
    <ligand>
        <name>FAD</name>
        <dbReference type="ChEBI" id="CHEBI:57692"/>
    </ligand>
</feature>
<feature type="binding site" evidence="2">
    <location>
        <position position="569"/>
    </location>
    <ligand>
        <name>fumarate</name>
        <dbReference type="ChEBI" id="CHEBI:29806"/>
    </ligand>
</feature>
<feature type="binding site" evidence="2">
    <location>
        <position position="569"/>
    </location>
    <ligand>
        <name>succinate</name>
        <dbReference type="ChEBI" id="CHEBI:30031"/>
    </ligand>
</feature>
<feature type="binding site" evidence="2">
    <location>
        <position position="572"/>
    </location>
    <ligand>
        <name>fumarate</name>
        <dbReference type="ChEBI" id="CHEBI:29806"/>
    </ligand>
</feature>
<feature type="binding site" evidence="2">
    <location>
        <position position="572"/>
    </location>
    <ligand>
        <name>succinate</name>
        <dbReference type="ChEBI" id="CHEBI:30031"/>
    </ligand>
</feature>
<feature type="binding site" evidence="2">
    <location>
        <position position="574"/>
    </location>
    <ligand>
        <name>FAD</name>
        <dbReference type="ChEBI" id="CHEBI:57692"/>
    </ligand>
</feature>
<feature type="binding site" evidence="2">
    <location>
        <position position="575"/>
    </location>
    <ligand>
        <name>FAD</name>
        <dbReference type="ChEBI" id="CHEBI:57692"/>
    </ligand>
</feature>
<name>FCCA_SHEFN</name>
<proteinExistence type="evidence at protein level"/>
<reference key="1">
    <citation type="journal article" date="1992" name="Biochemistry">
        <title>Sequence of the gene encoding flavocytochrome c from Shewanella putrefaciens: a tetraheme flavoenzyme that is a soluble fumarate reductase related to the membrane-bound enzymes from other bacteria.</title>
        <authorList>
            <person name="Pealing S.L."/>
            <person name="Black A.C."/>
            <person name="Manson F.D.C."/>
            <person name="Ward F.B."/>
            <person name="Chapman S.K."/>
            <person name="Reid G.A."/>
        </authorList>
    </citation>
    <scope>NUCLEOTIDE SEQUENCE [GENOMIC DNA]</scope>
    <scope>PROTEIN SEQUENCE OF 26-38</scope>
    <scope>INDUCTION</scope>
    <source>
        <strain>NCIMB 400</strain>
    </source>
</reference>
<reference key="2">
    <citation type="submission" date="2006-08" db="EMBL/GenBank/DDBJ databases">
        <title>Complete sequence of Shewanella frigidimarina NCIMB 400.</title>
        <authorList>
            <consortium name="US DOE Joint Genome Institute"/>
            <person name="Copeland A."/>
            <person name="Lucas S."/>
            <person name="Lapidus A."/>
            <person name="Barry K."/>
            <person name="Detter J.C."/>
            <person name="Glavina del Rio T."/>
            <person name="Hammon N."/>
            <person name="Israni S."/>
            <person name="Dalin E."/>
            <person name="Tice H."/>
            <person name="Pitluck S."/>
            <person name="Fredrickson J.K."/>
            <person name="Kolker E."/>
            <person name="McCuel L.A."/>
            <person name="DiChristina T."/>
            <person name="Nealson K.H."/>
            <person name="Newman D."/>
            <person name="Tiedje J.M."/>
            <person name="Zhou J."/>
            <person name="Romine M.F."/>
            <person name="Culley D.E."/>
            <person name="Serres M."/>
            <person name="Chertkov O."/>
            <person name="Brettin T."/>
            <person name="Bruce D."/>
            <person name="Han C."/>
            <person name="Tapia R."/>
            <person name="Gilna P."/>
            <person name="Schmutz J."/>
            <person name="Larimer F."/>
            <person name="Land M."/>
            <person name="Hauser L."/>
            <person name="Kyrpides N."/>
            <person name="Mikhailova N."/>
            <person name="Richardson P."/>
        </authorList>
    </citation>
    <scope>NUCLEOTIDE SEQUENCE [LARGE SCALE GENOMIC DNA]</scope>
    <source>
        <strain>NCIMB 400</strain>
    </source>
</reference>
<reference key="3">
    <citation type="journal article" date="1994" name="Biochem. J.">
        <title>Purification and properties of a novel cytochrome: flavocytochrome c from Shewanella putrefaciens.</title>
        <authorList>
            <person name="Morris C.J."/>
            <person name="Black A.C."/>
            <person name="Pealing S.L."/>
            <person name="Manson F.D."/>
            <person name="Chapman S.K."/>
            <person name="Reid G.A."/>
            <person name="Gibson D.M."/>
            <person name="Ward F.B."/>
        </authorList>
    </citation>
    <scope>FUNCTION</scope>
    <scope>COFACTOR</scope>
    <scope>ACTIVITY REGULATION</scope>
    <scope>BIOPHYSICOCHEMICAL PROPERTIES</scope>
    <scope>SUBUNIT</scope>
    <scope>SUBCELLULAR LOCATION</scope>
    <source>
        <strain>NCIMB 400</strain>
    </source>
</reference>
<reference key="4">
    <citation type="journal article" date="1995" name="Biochemistry">
        <title>Spectroscopic and kinetic studies of the tetraheme flavocytochrome c from Shewanella putrefaciens NCIMB400.</title>
        <authorList>
            <person name="Pealing S.L."/>
            <person name="Cheesman M.R."/>
            <person name="Reid G.A."/>
            <person name="Thomson A.J."/>
            <person name="Ward F.B."/>
            <person name="Chapman S.K."/>
        </authorList>
    </citation>
    <scope>COFACTOR</scope>
    <source>
        <strain>NCIMB 400</strain>
    </source>
</reference>
<reference key="5">
    <citation type="journal article" date="1998" name="Microbiology">
        <title>Physiological function and regulation of flavocytochrome c3, the soluble fumarate reductase from Shewanella putrefaciens NCIMB 400.</title>
        <authorList>
            <person name="Gordon E.H.J."/>
            <person name="Pealing S.L."/>
            <person name="Chapman S.K."/>
            <person name="Ward F.B."/>
            <person name="Reid G.A."/>
        </authorList>
    </citation>
    <scope>FUNCTION</scope>
    <scope>INDUCTION</scope>
    <scope>DISRUPTION PHENOTYPE</scope>
    <source>
        <strain>NCIMB 400</strain>
    </source>
</reference>
<accession>Q07WU7</accession>
<accession>Q02469</accession>
<accession>Q9X969</accession>
<comment type="function">
    <text evidence="2 5 6">Flavocytochrome that catalyzes the reduction of fumarate to succinate (PubMed:8093012). Is essential for fumarate respiration during anaerobic growth, acting as the terminal reductase (PubMed:9579067). Receives electrons from the membrane-bound tetraheme c-type cytochrome CymA (By similarity). Is essentially unidirectional, catalyzing only fumarate reduction (PubMed:8093012). Cannot reduce nitrite, dimethylsulphoxide, trimethylamine-N-oxide (TMAO) or sulfite (PubMed:8093012). In vitro, can use the artificial electron donor methyl viologen (PubMed:8093012).</text>
</comment>
<comment type="catalytic activity">
    <reaction evidence="11">
        <text>2 Fe(III)-[cytochrome c] + succinate = fumarate + 2 Fe(II)-[cytochrome c] + 2 H(+)</text>
        <dbReference type="Rhea" id="RHEA:77903"/>
        <dbReference type="Rhea" id="RHEA-COMP:10350"/>
        <dbReference type="Rhea" id="RHEA-COMP:14399"/>
        <dbReference type="ChEBI" id="CHEBI:15378"/>
        <dbReference type="ChEBI" id="CHEBI:29033"/>
        <dbReference type="ChEBI" id="CHEBI:29034"/>
        <dbReference type="ChEBI" id="CHEBI:29806"/>
        <dbReference type="ChEBI" id="CHEBI:30031"/>
        <dbReference type="EC" id="1.3.2.4"/>
    </reaction>
    <physiologicalReaction direction="right-to-left" evidence="10">
        <dbReference type="Rhea" id="RHEA:77905"/>
    </physiologicalReaction>
</comment>
<comment type="cofactor">
    <cofactor evidence="5">
        <name>FAD</name>
        <dbReference type="ChEBI" id="CHEBI:57692"/>
    </cofactor>
    <text evidence="5">Binds 1 FAD per subunit.</text>
</comment>
<comment type="cofactor">
    <cofactor evidence="4 5">
        <name>heme c</name>
        <dbReference type="ChEBI" id="CHEBI:61717"/>
    </cofactor>
    <text evidence="4 5">Binds 4 heme c groups covalently per monomer (PubMed:7742319, PubMed:8093012). The environments of the hemes are not identical, with redox data showing two centers of -220 mV and -320 mV (PubMed:8093012).</text>
</comment>
<comment type="activity regulation">
    <text evidence="5">Mesaconic acid is a competitive inhibitor of fumarate reduction.</text>
</comment>
<comment type="biophysicochemical properties">
    <kinetics>
        <KM evidence="5">21 uM for fumarate (in the presence of methyl viologen)</KM>
        <KM evidence="5">200 uM for succinate (in the presence of 2,6-dichlorophenol-indophenol)</KM>
        <text evidence="5">kcat is 250 sec(-1) with fumarate as substrate. kcat is 0.07 sec(-1) with succinate as substrate.</text>
    </kinetics>
    <phDependence>
        <text evidence="5">Optimum pH is 7.4 for fumarate reduction.</text>
    </phDependence>
</comment>
<comment type="subunit">
    <text evidence="5">Monomer.</text>
</comment>
<comment type="subcellular location">
    <subcellularLocation>
        <location evidence="5">Periplasm</location>
    </subcellularLocation>
</comment>
<comment type="induction">
    <text evidence="3 6">Induced under anaerobic conditions in the presence of fumarate (PubMed:1333793, PubMed:9579067). Not expressed in aerobically grown cells (PubMed:9579067). Expression is also regulated hierarchically in response to the redox potential of available terminal electron acceptors (PubMed:9579067).</text>
</comment>
<comment type="disruption phenotype">
    <text evidence="6">Disruption of the gene abolishes the ability to grow with fumarate as terminal electron acceptor (PubMed:9579067). Growth with nitrate, trimethylamine N-oxide (TMAO) and other acceptors is unaffected (PubMed:9579067).</text>
</comment>
<comment type="similarity">
    <text evidence="9">In the C-terminal section; belongs to the FAD-dependent oxidoreductase 2 family. FRD/SDH subfamily.</text>
</comment>
<comment type="sequence caution" evidence="9">
    <conflict type="erroneous initiation">
        <sequence resource="EMBL-CDS" id="ABI73517"/>
    </conflict>
</comment>
<dbReference type="EC" id="1.3.2.4" evidence="11"/>
<dbReference type="EMBL" id="L04283">
    <property type="protein sequence ID" value="AAA70385.1"/>
    <property type="molecule type" value="Genomic_DNA"/>
</dbReference>
<dbReference type="EMBL" id="CP000447">
    <property type="protein sequence ID" value="ABI73517.1"/>
    <property type="status" value="ALT_INIT"/>
    <property type="molecule type" value="Genomic_DNA"/>
</dbReference>
<dbReference type="RefSeq" id="WP_041413240.1">
    <property type="nucleotide sequence ID" value="NC_008345.1"/>
</dbReference>
<dbReference type="SMR" id="Q07WU7"/>
<dbReference type="STRING" id="318167.Sfri_3690"/>
<dbReference type="KEGG" id="sfr:Sfri_3690"/>
<dbReference type="eggNOG" id="COG1053">
    <property type="taxonomic scope" value="Bacteria"/>
</dbReference>
<dbReference type="HOGENOM" id="CLU_011398_4_5_6"/>
<dbReference type="OrthoDB" id="9148689at2"/>
<dbReference type="BioCyc" id="MetaCyc:MONOMER-124342"/>
<dbReference type="SABIO-RK" id="Q07WU7"/>
<dbReference type="EvolutionaryTrace" id="Q07WU7"/>
<dbReference type="Proteomes" id="UP000000684">
    <property type="component" value="Chromosome"/>
</dbReference>
<dbReference type="GO" id="GO:0042597">
    <property type="term" value="C:periplasmic space"/>
    <property type="evidence" value="ECO:0007669"/>
    <property type="project" value="UniProtKB-SubCell"/>
</dbReference>
<dbReference type="GO" id="GO:0010181">
    <property type="term" value="F:FMN binding"/>
    <property type="evidence" value="ECO:0007669"/>
    <property type="project" value="InterPro"/>
</dbReference>
<dbReference type="GO" id="GO:0046872">
    <property type="term" value="F:metal ion binding"/>
    <property type="evidence" value="ECO:0007669"/>
    <property type="project" value="UniProtKB-KW"/>
</dbReference>
<dbReference type="GO" id="GO:0016491">
    <property type="term" value="F:oxidoreductase activity"/>
    <property type="evidence" value="ECO:0007669"/>
    <property type="project" value="UniProtKB-KW"/>
</dbReference>
<dbReference type="CDD" id="cd08168">
    <property type="entry name" value="Cytochrom_C3"/>
    <property type="match status" value="1"/>
</dbReference>
<dbReference type="FunFam" id="1.10.1130.10:FF:000003">
    <property type="entry name" value="Fumarate reductase flavoprotein subunit"/>
    <property type="match status" value="1"/>
</dbReference>
<dbReference type="FunFam" id="3.50.50.60:FF:000154">
    <property type="entry name" value="Fumarate reductase flavoprotein subunit"/>
    <property type="match status" value="1"/>
</dbReference>
<dbReference type="FunFam" id="3.90.700.10:FF:000007">
    <property type="entry name" value="NADH-dependent fumarate reductase"/>
    <property type="match status" value="1"/>
</dbReference>
<dbReference type="Gene3D" id="3.50.50.60">
    <property type="entry name" value="FAD/NAD(P)-binding domain"/>
    <property type="match status" value="1"/>
</dbReference>
<dbReference type="Gene3D" id="1.10.1130.10">
    <property type="entry name" value="Flavocytochrome C3, Chain A"/>
    <property type="match status" value="1"/>
</dbReference>
<dbReference type="Gene3D" id="3.90.700.10">
    <property type="entry name" value="Succinate dehydrogenase/fumarate reductase flavoprotein, catalytic domain"/>
    <property type="match status" value="1"/>
</dbReference>
<dbReference type="InterPro" id="IPR003953">
    <property type="entry name" value="FAD-dep_OxRdtase_2_FAD-bd"/>
</dbReference>
<dbReference type="InterPro" id="IPR050315">
    <property type="entry name" value="FAD-oxidoreductase_2"/>
</dbReference>
<dbReference type="InterPro" id="IPR036188">
    <property type="entry name" value="FAD/NAD-bd_sf"/>
</dbReference>
<dbReference type="InterPro" id="IPR010960">
    <property type="entry name" value="Flavocytochrome_c"/>
</dbReference>
<dbReference type="InterPro" id="IPR036280">
    <property type="entry name" value="Multihaem_cyt_sf"/>
</dbReference>
<dbReference type="InterPro" id="IPR027477">
    <property type="entry name" value="Succ_DH/fumarate_Rdtase_cat_sf"/>
</dbReference>
<dbReference type="InterPro" id="IPR012286">
    <property type="entry name" value="Tetrahaem_cytochrome"/>
</dbReference>
<dbReference type="InterPro" id="IPR013087">
    <property type="entry name" value="Znf_C2H2_type"/>
</dbReference>
<dbReference type="NCBIfam" id="TIGR01813">
    <property type="entry name" value="flavo_cyto_c"/>
    <property type="match status" value="1"/>
</dbReference>
<dbReference type="PANTHER" id="PTHR43400:SF7">
    <property type="entry name" value="FAD-DEPENDENT OXIDOREDUCTASE 2 FAD BINDING DOMAIN-CONTAINING PROTEIN"/>
    <property type="match status" value="1"/>
</dbReference>
<dbReference type="PANTHER" id="PTHR43400">
    <property type="entry name" value="FUMARATE REDUCTASE"/>
    <property type="match status" value="1"/>
</dbReference>
<dbReference type="Pfam" id="PF14537">
    <property type="entry name" value="Cytochrom_c3_2"/>
    <property type="match status" value="1"/>
</dbReference>
<dbReference type="Pfam" id="PF00890">
    <property type="entry name" value="FAD_binding_2"/>
    <property type="match status" value="1"/>
</dbReference>
<dbReference type="PRINTS" id="PR00368">
    <property type="entry name" value="FADPNR"/>
</dbReference>
<dbReference type="SUPFAM" id="SSF51905">
    <property type="entry name" value="FAD/NAD(P)-binding domain"/>
    <property type="match status" value="1"/>
</dbReference>
<dbReference type="SUPFAM" id="SSF48695">
    <property type="entry name" value="Multiheme cytochromes"/>
    <property type="match status" value="1"/>
</dbReference>
<dbReference type="SUPFAM" id="SSF56425">
    <property type="entry name" value="Succinate dehydrogenase/fumarate reductase flavoprotein, catalytic domain"/>
    <property type="match status" value="1"/>
</dbReference>
<dbReference type="PROSITE" id="PS51008">
    <property type="entry name" value="MULTIHEME_CYTC"/>
    <property type="match status" value="1"/>
</dbReference>
<keyword id="KW-0903">Direct protein sequencing</keyword>
<keyword id="KW-0249">Electron transport</keyword>
<keyword id="KW-0274">FAD</keyword>
<keyword id="KW-0285">Flavoprotein</keyword>
<keyword id="KW-0349">Heme</keyword>
<keyword id="KW-0408">Iron</keyword>
<keyword id="KW-0479">Metal-binding</keyword>
<keyword id="KW-0560">Oxidoreductase</keyword>
<keyword id="KW-0574">Periplasm</keyword>
<keyword id="KW-1185">Reference proteome</keyword>
<keyword id="KW-0732">Signal</keyword>
<keyword id="KW-0813">Transport</keyword>
<sequence>MKKMNLAVCIATLMGTAGLMGTAVAADNLAEFHVQNQECDSCHTPDGELSNDSLTYENTQCVSCHGTLAEVAETTKHEHYNAHASHFPGEVACTSCHSAHEKSMVYCDSCHSFDFNMPYAKKWLRDEPTIAELAKDKSERQAALASAPHDTVDVVVVGSGGAGFSAAISATDSGAKVILIEKEPVIGGNAKLAAGGMNAAWTDQQKAKKITDSPELMFEDTMKGGQNINDPALVKVLSSHSKDSVDWMTAMGADLTDVGMMGGASVNRAHRPTGGAGVGAHVVQVLYDNAVKRNIDLRMNTRGIEVLKDDKGTVKGILVKGMYKGYYWVKADAVILATGGFAKNNERVAKLDPSLKGFISTNQPGAVGDGLDVAENAGGALKDMQYIQAHPTLSVKGGVMVTEAVRGNGAILVNREGKRFVNEITTRDKASAAILAQTGKSAYLIFDDSVRKSLSKIDKYIGLGVAPTADSLVKLGKMEGIDGKALTETVARYNSLVSSGKDTDFERPNLPRALNEGNYYAIEVTPGVHHTMGGVMIDTKAEVMNAKKQVIPGLYGAGEVTGGVHGANRLGGNAISDIITFGRLAGEEAAKYSKKN</sequence>
<gene>
    <name evidence="8" type="primary">fccA</name>
    <name type="synonym">fcc3</name>
    <name type="ordered locus">Sfri_3690</name>
</gene>